<protein>
    <recommendedName>
        <fullName evidence="3">UDP-glycosyltransferase 73C9</fullName>
        <ecNumber evidence="2">2.4.1.-</ecNumber>
    </recommendedName>
</protein>
<keyword id="KW-0328">Glycosyltransferase</keyword>
<keyword id="KW-0808">Transferase</keyword>
<feature type="chain" id="PRO_0000452127" description="UDP-glycosyltransferase 73C9">
    <location>
        <begin position="1"/>
        <end position="495"/>
    </location>
</feature>
<feature type="active site" description="Proton acceptor" evidence="1">
    <location>
        <position position="24"/>
    </location>
</feature>
<feature type="active site" description="Charge relay" evidence="1">
    <location>
        <position position="129"/>
    </location>
</feature>
<feature type="binding site" evidence="1">
    <location>
        <begin position="23"/>
        <end position="26"/>
    </location>
    <ligand>
        <name>UDP-alpha-D-glucose</name>
        <dbReference type="ChEBI" id="CHEBI:58885"/>
    </ligand>
</feature>
<feature type="binding site" evidence="1">
    <location>
        <begin position="355"/>
        <end position="358"/>
    </location>
    <ligand>
        <name>UDP-alpha-D-glucose</name>
        <dbReference type="ChEBI" id="CHEBI:58885"/>
    </ligand>
</feature>
<feature type="binding site" evidence="1">
    <location>
        <begin position="373"/>
        <end position="381"/>
    </location>
    <ligand>
        <name>UDP-alpha-D-glucose</name>
        <dbReference type="ChEBI" id="CHEBI:58885"/>
    </ligand>
</feature>
<feature type="binding site" evidence="1">
    <location>
        <begin position="397"/>
        <end position="398"/>
    </location>
    <ligand>
        <name>UDP-alpha-D-glucose</name>
        <dbReference type="ChEBI" id="CHEBI:58885"/>
    </ligand>
</feature>
<comment type="function">
    <text evidence="2">Possesses very weak glucosyltransferase activity toward 2,4,5-trichlorophenol (TCP), when assayed with high concentrations of TCP.</text>
</comment>
<comment type="similarity">
    <text evidence="4">Belongs to the UDP-glycosyltransferase family.</text>
</comment>
<dbReference type="EC" id="2.4.1.-" evidence="2"/>
<dbReference type="EMBL" id="JQ291612">
    <property type="protein sequence ID" value="AFN26665.1"/>
    <property type="molecule type" value="Genomic_DNA"/>
</dbReference>
<dbReference type="SMR" id="K4GMD6"/>
<dbReference type="GO" id="GO:0035251">
    <property type="term" value="F:UDP-glucosyltransferase activity"/>
    <property type="evidence" value="ECO:0007669"/>
    <property type="project" value="TreeGrafter"/>
</dbReference>
<dbReference type="GO" id="GO:0016134">
    <property type="term" value="P:saponin metabolic process"/>
    <property type="evidence" value="ECO:0007669"/>
    <property type="project" value="UniProtKB-ARBA"/>
</dbReference>
<dbReference type="CDD" id="cd03784">
    <property type="entry name" value="GT1_Gtf-like"/>
    <property type="match status" value="1"/>
</dbReference>
<dbReference type="FunFam" id="3.40.50.2000:FF:000047">
    <property type="entry name" value="Glycosyltransferase"/>
    <property type="match status" value="1"/>
</dbReference>
<dbReference type="FunFam" id="3.40.50.2000:FF:000071">
    <property type="entry name" value="Glycosyltransferase"/>
    <property type="match status" value="1"/>
</dbReference>
<dbReference type="Gene3D" id="3.40.50.2000">
    <property type="entry name" value="Glycogen Phosphorylase B"/>
    <property type="match status" value="2"/>
</dbReference>
<dbReference type="InterPro" id="IPR002213">
    <property type="entry name" value="UDP_glucos_trans"/>
</dbReference>
<dbReference type="InterPro" id="IPR035595">
    <property type="entry name" value="UDP_glycos_trans_CS"/>
</dbReference>
<dbReference type="PANTHER" id="PTHR48047">
    <property type="entry name" value="GLYCOSYLTRANSFERASE"/>
    <property type="match status" value="1"/>
</dbReference>
<dbReference type="PANTHER" id="PTHR48047:SF153">
    <property type="entry name" value="UDP-GLYCOSYLTRANSFERASE 73C5-RELATED"/>
    <property type="match status" value="1"/>
</dbReference>
<dbReference type="Pfam" id="PF00201">
    <property type="entry name" value="UDPGT"/>
    <property type="match status" value="1"/>
</dbReference>
<dbReference type="SUPFAM" id="SSF53756">
    <property type="entry name" value="UDP-Glycosyltransferase/glycogen phosphorylase"/>
    <property type="match status" value="1"/>
</dbReference>
<dbReference type="PROSITE" id="PS00375">
    <property type="entry name" value="UDPGT"/>
    <property type="match status" value="1"/>
</dbReference>
<sequence length="495" mass="55543">MVSEITHQSYPLHFVLFPYMAQGHMIPMVDIARLLAQRGVKITIVTTPQNAARFENVLSRAIESGLPISIVQVKLPSQEAGLPEGIETFESLVSMELLVPFFKAVNMLEEPVQKLFEEMSPQPSCIISDFCLHYTSKIAKKFNIPKILFHGMCCFCLLCMHVLRKNCEILENLKSDKEHFVVPYFPDRVEFTRPQVPMATYAPGDWQEIREDIVEADKTSYGVIVNTYQELEPAYANDYKEARSGKAWTIGPVSLCNKVGADKAERGNKADIDQDECLKWLDSKEEGSVLYVCLGSNCSVPLSQLKELGLGLEESQRPFIWVVRGWEKNKELLEWFSESGFEERVKDRGLLIKGWSPQMLILAHHSVGGFLTHCGWNSTLEGITSGIPLLTWPLIVDQFCNQKLVVQVLKVGVSAGVEEVTNWGEEEKIGVLVDKEGVKKAVEELMGESDDAKERRKRVKALGQLAHKAVEEGGSSHSNITSLLEDIMQLAQSNN</sequence>
<organism>
    <name type="scientific">Barbarea vulgaris</name>
    <name type="common">Yellow rocket</name>
    <name type="synonym">Erysimum barbarea</name>
    <dbReference type="NCBI Taxonomy" id="50459"/>
    <lineage>
        <taxon>Eukaryota</taxon>
        <taxon>Viridiplantae</taxon>
        <taxon>Streptophyta</taxon>
        <taxon>Embryophyta</taxon>
        <taxon>Tracheophyta</taxon>
        <taxon>Spermatophyta</taxon>
        <taxon>Magnoliopsida</taxon>
        <taxon>eudicotyledons</taxon>
        <taxon>Gunneridae</taxon>
        <taxon>Pentapetalae</taxon>
        <taxon>rosids</taxon>
        <taxon>malvids</taxon>
        <taxon>Brassicales</taxon>
        <taxon>Brassicaceae</taxon>
        <taxon>Cardamineae</taxon>
        <taxon>Barbarea</taxon>
    </lineage>
</organism>
<evidence type="ECO:0000250" key="1">
    <source>
        <dbReference type="UniProtKB" id="A0A0A1HA03"/>
    </source>
</evidence>
<evidence type="ECO:0000269" key="2">
    <source>
    </source>
</evidence>
<evidence type="ECO:0000303" key="3">
    <source>
    </source>
</evidence>
<evidence type="ECO:0000305" key="4"/>
<proteinExistence type="inferred from homology"/>
<name>73C9_BARVU</name>
<reference key="1">
    <citation type="journal article" date="2012" name="Plant Physiol.">
        <title>UDP-glycosyltransferases from the UGT73C subfamily in Barbarea vulgaris catalyze sapogenin 3-O-glucosylation in saponin-mediated insect resistance.</title>
        <authorList>
            <person name="Augustin J.M."/>
            <person name="Drok S."/>
            <person name="Shinoda T."/>
            <person name="Sanmiya K."/>
            <person name="Nielsen J.K."/>
            <person name="Khakimov B."/>
            <person name="Olsen C.E."/>
            <person name="Hansen E.H."/>
            <person name="Kuzina V."/>
            <person name="Ekstrom C.T."/>
            <person name="Hauser T."/>
            <person name="Bak S."/>
        </authorList>
    </citation>
    <scope>NUCLEOTIDE SEQUENCE [GENOMIC DNA]</scope>
    <scope>FUNCTION</scope>
</reference>
<accession>K4GMD6</accession>
<gene>
    <name evidence="3" type="primary">UGT73C9</name>
</gene>